<name>RECR_ANADF</name>
<keyword id="KW-0227">DNA damage</keyword>
<keyword id="KW-0233">DNA recombination</keyword>
<keyword id="KW-0234">DNA repair</keyword>
<keyword id="KW-0479">Metal-binding</keyword>
<keyword id="KW-1185">Reference proteome</keyword>
<keyword id="KW-0862">Zinc</keyword>
<keyword id="KW-0863">Zinc-finger</keyword>
<organism>
    <name type="scientific">Anaeromyxobacter sp. (strain Fw109-5)</name>
    <dbReference type="NCBI Taxonomy" id="404589"/>
    <lineage>
        <taxon>Bacteria</taxon>
        <taxon>Pseudomonadati</taxon>
        <taxon>Myxococcota</taxon>
        <taxon>Myxococcia</taxon>
        <taxon>Myxococcales</taxon>
        <taxon>Cystobacterineae</taxon>
        <taxon>Anaeromyxobacteraceae</taxon>
        <taxon>Anaeromyxobacter</taxon>
    </lineage>
</organism>
<proteinExistence type="inferred from homology"/>
<dbReference type="EMBL" id="CP000769">
    <property type="protein sequence ID" value="ABS27939.1"/>
    <property type="molecule type" value="Genomic_DNA"/>
</dbReference>
<dbReference type="RefSeq" id="WP_012098567.1">
    <property type="nucleotide sequence ID" value="NC_009675.1"/>
</dbReference>
<dbReference type="SMR" id="A7HGU3"/>
<dbReference type="STRING" id="404589.Anae109_3760"/>
<dbReference type="KEGG" id="afw:Anae109_3760"/>
<dbReference type="eggNOG" id="COG0353">
    <property type="taxonomic scope" value="Bacteria"/>
</dbReference>
<dbReference type="HOGENOM" id="CLU_060739_1_0_7"/>
<dbReference type="OrthoDB" id="9802672at2"/>
<dbReference type="Proteomes" id="UP000006382">
    <property type="component" value="Chromosome"/>
</dbReference>
<dbReference type="GO" id="GO:0003677">
    <property type="term" value="F:DNA binding"/>
    <property type="evidence" value="ECO:0007669"/>
    <property type="project" value="UniProtKB-UniRule"/>
</dbReference>
<dbReference type="GO" id="GO:0008270">
    <property type="term" value="F:zinc ion binding"/>
    <property type="evidence" value="ECO:0007669"/>
    <property type="project" value="UniProtKB-KW"/>
</dbReference>
<dbReference type="GO" id="GO:0006310">
    <property type="term" value="P:DNA recombination"/>
    <property type="evidence" value="ECO:0007669"/>
    <property type="project" value="UniProtKB-UniRule"/>
</dbReference>
<dbReference type="GO" id="GO:0006281">
    <property type="term" value="P:DNA repair"/>
    <property type="evidence" value="ECO:0007669"/>
    <property type="project" value="UniProtKB-UniRule"/>
</dbReference>
<dbReference type="CDD" id="cd01025">
    <property type="entry name" value="TOPRIM_recR"/>
    <property type="match status" value="1"/>
</dbReference>
<dbReference type="Gene3D" id="3.30.60.80">
    <property type="match status" value="1"/>
</dbReference>
<dbReference type="Gene3D" id="3.40.1360.10">
    <property type="match status" value="1"/>
</dbReference>
<dbReference type="Gene3D" id="6.10.250.240">
    <property type="match status" value="1"/>
</dbReference>
<dbReference type="Gene3D" id="1.10.8.420">
    <property type="entry name" value="RecR Domain 1"/>
    <property type="match status" value="1"/>
</dbReference>
<dbReference type="HAMAP" id="MF_00017">
    <property type="entry name" value="RecR"/>
    <property type="match status" value="1"/>
</dbReference>
<dbReference type="InterPro" id="IPR000093">
    <property type="entry name" value="DNA_Rcmb_RecR"/>
</dbReference>
<dbReference type="InterPro" id="IPR003583">
    <property type="entry name" value="Hlx-hairpin-Hlx_DNA-bd_motif"/>
</dbReference>
<dbReference type="InterPro" id="IPR023627">
    <property type="entry name" value="Rcmb_RecR"/>
</dbReference>
<dbReference type="InterPro" id="IPR015967">
    <property type="entry name" value="Rcmb_RecR_Znf"/>
</dbReference>
<dbReference type="InterPro" id="IPR006171">
    <property type="entry name" value="TOPRIM_dom"/>
</dbReference>
<dbReference type="InterPro" id="IPR034137">
    <property type="entry name" value="TOPRIM_RecR"/>
</dbReference>
<dbReference type="NCBIfam" id="TIGR00615">
    <property type="entry name" value="recR"/>
    <property type="match status" value="1"/>
</dbReference>
<dbReference type="PANTHER" id="PTHR30446">
    <property type="entry name" value="RECOMBINATION PROTEIN RECR"/>
    <property type="match status" value="1"/>
</dbReference>
<dbReference type="PANTHER" id="PTHR30446:SF0">
    <property type="entry name" value="RECOMBINATION PROTEIN RECR"/>
    <property type="match status" value="1"/>
</dbReference>
<dbReference type="Pfam" id="PF21175">
    <property type="entry name" value="RecR_C"/>
    <property type="match status" value="1"/>
</dbReference>
<dbReference type="Pfam" id="PF21176">
    <property type="entry name" value="RecR_HhH"/>
    <property type="match status" value="1"/>
</dbReference>
<dbReference type="Pfam" id="PF02132">
    <property type="entry name" value="RecR_ZnF"/>
    <property type="match status" value="1"/>
</dbReference>
<dbReference type="Pfam" id="PF13662">
    <property type="entry name" value="Toprim_4"/>
    <property type="match status" value="1"/>
</dbReference>
<dbReference type="SMART" id="SM00278">
    <property type="entry name" value="HhH1"/>
    <property type="match status" value="1"/>
</dbReference>
<dbReference type="SMART" id="SM00493">
    <property type="entry name" value="TOPRIM"/>
    <property type="match status" value="1"/>
</dbReference>
<dbReference type="SUPFAM" id="SSF111304">
    <property type="entry name" value="Recombination protein RecR"/>
    <property type="match status" value="1"/>
</dbReference>
<dbReference type="PROSITE" id="PS01300">
    <property type="entry name" value="RECR"/>
    <property type="match status" value="1"/>
</dbReference>
<dbReference type="PROSITE" id="PS50880">
    <property type="entry name" value="TOPRIM"/>
    <property type="match status" value="1"/>
</dbReference>
<protein>
    <recommendedName>
        <fullName evidence="1">Recombination protein RecR</fullName>
    </recommendedName>
</protein>
<comment type="function">
    <text evidence="1">May play a role in DNA repair. It seems to be involved in an RecBC-independent recombinational process of DNA repair. It may act with RecF and RecO.</text>
</comment>
<comment type="similarity">
    <text evidence="1">Belongs to the RecR family.</text>
</comment>
<gene>
    <name evidence="1" type="primary">recR</name>
    <name type="ordered locus">Anae109_3760</name>
</gene>
<accession>A7HGU3</accession>
<feature type="chain" id="PRO_0000322858" description="Recombination protein RecR">
    <location>
        <begin position="1"/>
        <end position="198"/>
    </location>
</feature>
<feature type="domain" description="Toprim" evidence="1">
    <location>
        <begin position="80"/>
        <end position="175"/>
    </location>
</feature>
<feature type="zinc finger region" description="C4-type" evidence="1">
    <location>
        <begin position="57"/>
        <end position="72"/>
    </location>
</feature>
<reference key="1">
    <citation type="journal article" date="2015" name="Genome Announc.">
        <title>Complete genome sequence of Anaeromyxobacter sp. Fw109-5, an anaerobic, metal-reducing bacterium isolated from a contaminated subsurface environment.</title>
        <authorList>
            <person name="Hwang C."/>
            <person name="Copeland A."/>
            <person name="Lucas S."/>
            <person name="Lapidus A."/>
            <person name="Barry K."/>
            <person name="Glavina Del Rio T."/>
            <person name="Dalin E."/>
            <person name="Tice H."/>
            <person name="Pitluck S."/>
            <person name="Sims D."/>
            <person name="Brettin T."/>
            <person name="Bruce D.C."/>
            <person name="Detter J.C."/>
            <person name="Han C.S."/>
            <person name="Schmutz J."/>
            <person name="Larimer F.W."/>
            <person name="Land M.L."/>
            <person name="Hauser L.J."/>
            <person name="Kyrpides N."/>
            <person name="Lykidis A."/>
            <person name="Richardson P."/>
            <person name="Belieav A."/>
            <person name="Sanford R.A."/>
            <person name="Loeffler F.E."/>
            <person name="Fields M.W."/>
        </authorList>
    </citation>
    <scope>NUCLEOTIDE SEQUENCE [LARGE SCALE GENOMIC DNA]</scope>
    <source>
        <strain>Fw109-5</strain>
    </source>
</reference>
<sequence>MAVADPIARLVKELAKLPGIGEKTAQRLAFHILKAGPGYAGELAGAIAGVVRDVRLCSECQTLTDKDPCAVCADPRRDSRIICVVEGVPDLLAVERTHEFRGRYHVLHGALSPLDGIGPSELKIRELLLRLEREPAEEIVVATNPDVEGEATALYLTKLLKPLGVKVTRIAQGIPMGGDLEYADQVTLARALAGRREL</sequence>
<evidence type="ECO:0000255" key="1">
    <source>
        <dbReference type="HAMAP-Rule" id="MF_00017"/>
    </source>
</evidence>